<proteinExistence type="evidence at protein level"/>
<reference key="1">
    <citation type="journal article" date="1997" name="Nature">
        <title>Genomic sequence of a Lyme disease spirochaete, Borrelia burgdorferi.</title>
        <authorList>
            <person name="Fraser C.M."/>
            <person name="Casjens S."/>
            <person name="Huang W.M."/>
            <person name="Sutton G.G."/>
            <person name="Clayton R.A."/>
            <person name="Lathigra R."/>
            <person name="White O."/>
            <person name="Ketchum K.A."/>
            <person name="Dodson R.J."/>
            <person name="Hickey E.K."/>
            <person name="Gwinn M.L."/>
            <person name="Dougherty B.A."/>
            <person name="Tomb J.-F."/>
            <person name="Fleischmann R.D."/>
            <person name="Richardson D.L."/>
            <person name="Peterson J.D."/>
            <person name="Kerlavage A.R."/>
            <person name="Quackenbush J."/>
            <person name="Salzberg S.L."/>
            <person name="Hanson M."/>
            <person name="van Vugt R."/>
            <person name="Palmer N."/>
            <person name="Adams M.D."/>
            <person name="Gocayne J.D."/>
            <person name="Weidman J.F."/>
            <person name="Utterback T.R."/>
            <person name="Watthey L."/>
            <person name="McDonald L.A."/>
            <person name="Artiach P."/>
            <person name="Bowman C."/>
            <person name="Garland S.A."/>
            <person name="Fujii C."/>
            <person name="Cotton M.D."/>
            <person name="Horst K."/>
            <person name="Roberts K.M."/>
            <person name="Hatch B."/>
            <person name="Smith H.O."/>
            <person name="Venter J.C."/>
        </authorList>
    </citation>
    <scope>NUCLEOTIDE SEQUENCE [LARGE SCALE GENOMIC DNA]</scope>
    <source>
        <strain>ATCC 35210 / DSM 4680 / CIP 102532 / B31</strain>
    </source>
</reference>
<reference key="2">
    <citation type="journal article" date="2010" name="Mol. Microbiol.">
        <title>Analysis of a Borrelia burgdorferi phosphodiesterase demonstrates a role for cyclic-di-guanosine monophosphate in motility and virulence.</title>
        <authorList>
            <person name="Sultan S.Z."/>
            <person name="Pitzer J.E."/>
            <person name="Miller M.R."/>
            <person name="Motaleb M.A."/>
        </authorList>
    </citation>
    <scope>FUNCTION</scope>
    <scope>CATALYTIC ACTIVITY</scope>
    <scope>BIOPHYSICOCHEMICAL PROPERTIES</scope>
    <scope>DISRUPTION PHENOTYPE</scope>
    <source>
        <strain>ATCC 35210 / DSM 4680 / CIP 102532 / B31</strain>
    </source>
</reference>
<reference key="3">
    <citation type="journal article" date="2011" name="Infect. Immun.">
        <title>Analysis of the HD-GYP domain cyclic dimeric GMP phosphodiesterase reveals a role in motility and the enzootic life cycle of Borrelia burgdorferi.</title>
        <authorList>
            <person name="Sultan S.Z."/>
            <person name="Pitzer J.E."/>
            <person name="Boquoi T."/>
            <person name="Hobbs G."/>
            <person name="Miller M.R."/>
            <person name="Motaleb M.A."/>
        </authorList>
    </citation>
    <scope>GENE NAME</scope>
    <source>
        <strain>ATCC 35210 / DSM 4680 / CIP 102532 / B31</strain>
    </source>
</reference>
<protein>
    <recommendedName>
        <fullName evidence="4">Cyclic di-GMP phosphodiesterase PdeA</fullName>
        <ecNumber evidence="2">3.1.4.52</ecNumber>
    </recommendedName>
</protein>
<feature type="chain" id="PRO_0000440639" description="Cyclic di-GMP phosphodiesterase PdeA">
    <location>
        <begin position="1"/>
        <end position="670"/>
    </location>
</feature>
<feature type="domain" description="EAL" evidence="1">
    <location>
        <begin position="428"/>
        <end position="670"/>
    </location>
</feature>
<keyword id="KW-0973">c-di-GMP</keyword>
<keyword id="KW-0378">Hydrolase</keyword>
<keyword id="KW-1185">Reference proteome</keyword>
<evidence type="ECO:0000255" key="1">
    <source>
        <dbReference type="PROSITE-ProRule" id="PRU00074"/>
    </source>
</evidence>
<evidence type="ECO:0000269" key="2">
    <source>
    </source>
</evidence>
<evidence type="ECO:0000303" key="3">
    <source>
    </source>
</evidence>
<evidence type="ECO:0000305" key="4"/>
<evidence type="ECO:0000312" key="5">
    <source>
        <dbReference type="EMBL" id="AAC66750.1"/>
    </source>
</evidence>
<comment type="function">
    <text evidence="2">Phosphodiesterase (PDE) that catalyzes the hydrolysis of cyclic diguanylate (c-di-GMP) to pGpG.</text>
</comment>
<comment type="catalytic activity">
    <reaction evidence="2">
        <text>3',3'-c-di-GMP + H2O = 5'-phosphoguanylyl(3'-&gt;5')guanosine + H(+)</text>
        <dbReference type="Rhea" id="RHEA:24902"/>
        <dbReference type="ChEBI" id="CHEBI:15377"/>
        <dbReference type="ChEBI" id="CHEBI:15378"/>
        <dbReference type="ChEBI" id="CHEBI:58754"/>
        <dbReference type="ChEBI" id="CHEBI:58805"/>
        <dbReference type="EC" id="3.1.4.52"/>
    </reaction>
</comment>
<comment type="biophysicochemical properties">
    <kinetics>
        <KM evidence="2">0.054 uM for c-di-GMP</KM>
    </kinetics>
</comment>
<comment type="disruption phenotype">
    <text evidence="2">Inactivation results in altered motility. Mutants are able to survive in tick guts, but they are unable to establish an infection in mice.</text>
</comment>
<dbReference type="EC" id="3.1.4.52" evidence="2"/>
<dbReference type="EMBL" id="AE000783">
    <property type="protein sequence ID" value="AAC66750.1"/>
    <property type="molecule type" value="Genomic_DNA"/>
</dbReference>
<dbReference type="PIR" id="B70145">
    <property type="entry name" value="B70145"/>
</dbReference>
<dbReference type="RefSeq" id="NP_212497.1">
    <property type="nucleotide sequence ID" value="NC_001318.1"/>
</dbReference>
<dbReference type="RefSeq" id="WP_002665233.1">
    <property type="nucleotide sequence ID" value="NC_001318.1"/>
</dbReference>
<dbReference type="SMR" id="O51338"/>
<dbReference type="STRING" id="224326.BB_0363"/>
<dbReference type="PaxDb" id="224326-BB_0363"/>
<dbReference type="EnsemblBacteria" id="AAC66750">
    <property type="protein sequence ID" value="AAC66750"/>
    <property type="gene ID" value="BB_0363"/>
</dbReference>
<dbReference type="KEGG" id="bbu:BB_0363"/>
<dbReference type="PATRIC" id="fig|224326.49.peg.758"/>
<dbReference type="HOGENOM" id="CLU_413710_0_0_12"/>
<dbReference type="OrthoDB" id="366324at2"/>
<dbReference type="Proteomes" id="UP000001807">
    <property type="component" value="Chromosome"/>
</dbReference>
<dbReference type="GO" id="GO:0071111">
    <property type="term" value="F:cyclic-guanylate-specific phosphodiesterase activity"/>
    <property type="evidence" value="ECO:0007669"/>
    <property type="project" value="UniProtKB-EC"/>
</dbReference>
<dbReference type="CDD" id="cd01948">
    <property type="entry name" value="EAL"/>
    <property type="match status" value="1"/>
</dbReference>
<dbReference type="Gene3D" id="3.20.20.450">
    <property type="entry name" value="EAL domain"/>
    <property type="match status" value="1"/>
</dbReference>
<dbReference type="InterPro" id="IPR050706">
    <property type="entry name" value="Cyclic-di-GMP_PDE-like"/>
</dbReference>
<dbReference type="InterPro" id="IPR001633">
    <property type="entry name" value="EAL_dom"/>
</dbReference>
<dbReference type="InterPro" id="IPR035919">
    <property type="entry name" value="EAL_sf"/>
</dbReference>
<dbReference type="PANTHER" id="PTHR33121:SF23">
    <property type="entry name" value="CYCLIC DI-GMP PHOSPHODIESTERASE PDEB"/>
    <property type="match status" value="1"/>
</dbReference>
<dbReference type="PANTHER" id="PTHR33121">
    <property type="entry name" value="CYCLIC DI-GMP PHOSPHODIESTERASE PDEF"/>
    <property type="match status" value="1"/>
</dbReference>
<dbReference type="Pfam" id="PF00563">
    <property type="entry name" value="EAL"/>
    <property type="match status" value="1"/>
</dbReference>
<dbReference type="SMART" id="SM00052">
    <property type="entry name" value="EAL"/>
    <property type="match status" value="1"/>
</dbReference>
<dbReference type="SUPFAM" id="SSF141868">
    <property type="entry name" value="EAL domain-like"/>
    <property type="match status" value="1"/>
</dbReference>
<dbReference type="PROSITE" id="PS50883">
    <property type="entry name" value="EAL"/>
    <property type="match status" value="1"/>
</dbReference>
<organism>
    <name type="scientific">Borreliella burgdorferi (strain ATCC 35210 / DSM 4680 / CIP 102532 / B31)</name>
    <name type="common">Borrelia burgdorferi</name>
    <dbReference type="NCBI Taxonomy" id="224326"/>
    <lineage>
        <taxon>Bacteria</taxon>
        <taxon>Pseudomonadati</taxon>
        <taxon>Spirochaetota</taxon>
        <taxon>Spirochaetia</taxon>
        <taxon>Spirochaetales</taxon>
        <taxon>Borreliaceae</taxon>
        <taxon>Borreliella</taxon>
    </lineage>
</organism>
<accession>O51338</accession>
<name>PDEA_BORBU</name>
<gene>
    <name evidence="3" type="primary">pdeA</name>
    <name evidence="5" type="ordered locus">BB_0363</name>
</gene>
<sequence>MNKVNNYQNINSVIISKKEVGLRDLIKLKSIFNLIQIVKSEKALYSEYVKQNNIKFAIIYNYEKPIDFSINIANELKNANKIHSIIISKEKFDEEYLKLDHIEIIKDISELEYKQSLIHQKKLFCDNKNTTLDFFLNLSELIKEIVIITNTKNEIIYINEKGSKNLNLPMKTSGNIIKVTDIDIRDWEKLEKINLSYHTNSIPEFKNILITDCLLTLKNNKKLHVDIFISTIAQNNIDKLITIKEISNSNKIENYKYLEIIDSQDEIQNAKEIEKLLVNHMDIYKKKSIYLLNLDVSLTAEYEYKEDQEKLNAKILKIMYSKIMSLYSEYIFKLKHNNLIVIISTSGGEKRIISIAKKIKKTIALAFKKEDIIIFKFNIGIIEVNLKENLEFKIPKLMMATKISSEYKESNPTIYKEELPEAVILKNQNKIFQYILKAIKNDFFTLYYQKINPLKKNLKPKIEILTRLFDHMGKPIPNNQIFNLIDKYNLTVEVDTLVVKKALREYKSFVSKNGIHIFSINISPYSLKSQNFRIFLRDTLLKSQIPLQNICLEITETGILENFEIINKYFQELKSFGIKLALDDFGSGHTSLSYIKTLPIDLLKIDGSFIKAINSSEIDFVIIKSIKKIADTKNIKIIAEFVYNEEILKKIIELEIDYGQGFLWHKPEPI</sequence>